<comment type="function">
    <text evidence="1">Activates the JUN N-terminal pathway through activation of the MAP kinase kinase MAP2K7. Acts synergistically with PRDX3 to regulate the activation of NF-kappa-B in the cytosol. This activation is kinase-dependent and involves activating the IKK complex, the IKBKB-containing complex that phosphorylates inhibitors of NF-kappa-B (By similarity).</text>
</comment>
<comment type="catalytic activity">
    <reaction>
        <text>L-seryl-[protein] + ATP = O-phospho-L-seryl-[protein] + ADP + H(+)</text>
        <dbReference type="Rhea" id="RHEA:17989"/>
        <dbReference type="Rhea" id="RHEA-COMP:9863"/>
        <dbReference type="Rhea" id="RHEA-COMP:11604"/>
        <dbReference type="ChEBI" id="CHEBI:15378"/>
        <dbReference type="ChEBI" id="CHEBI:29999"/>
        <dbReference type="ChEBI" id="CHEBI:30616"/>
        <dbReference type="ChEBI" id="CHEBI:83421"/>
        <dbReference type="ChEBI" id="CHEBI:456216"/>
        <dbReference type="EC" id="2.7.11.25"/>
    </reaction>
</comment>
<comment type="catalytic activity">
    <reaction>
        <text>L-threonyl-[protein] + ATP = O-phospho-L-threonyl-[protein] + ADP + H(+)</text>
        <dbReference type="Rhea" id="RHEA:46608"/>
        <dbReference type="Rhea" id="RHEA-COMP:11060"/>
        <dbReference type="Rhea" id="RHEA-COMP:11605"/>
        <dbReference type="ChEBI" id="CHEBI:15378"/>
        <dbReference type="ChEBI" id="CHEBI:30013"/>
        <dbReference type="ChEBI" id="CHEBI:30616"/>
        <dbReference type="ChEBI" id="CHEBI:61977"/>
        <dbReference type="ChEBI" id="CHEBI:456216"/>
        <dbReference type="EC" id="2.7.11.25"/>
    </reaction>
</comment>
<comment type="cofactor">
    <cofactor evidence="1">
        <name>Mg(2+)</name>
        <dbReference type="ChEBI" id="CHEBI:18420"/>
    </cofactor>
</comment>
<comment type="activity regulation">
    <text evidence="1">Activated by autophosphorylation and homodimerization.</text>
</comment>
<comment type="subunit">
    <text evidence="1">Homodimer; forms dimers through the leucine-zipper motif. Interacts with the C-terminus of MAPK8IP1 through the kinase catalytic domain. Binds PRDX3. Associates with the IKK complex through the kinase domain (By similarity).</text>
</comment>
<comment type="subcellular location">
    <subcellularLocation>
        <location>Cytoplasm</location>
    </subcellularLocation>
    <subcellularLocation>
        <location evidence="1">Membrane</location>
        <topology evidence="1">Peripheral membrane protein</topology>
    </subcellularLocation>
</comment>
<comment type="PTM">
    <text evidence="1">Autophosphorylated on serine and threonine residues.</text>
</comment>
<comment type="similarity">
    <text evidence="3">Belongs to the protein kinase superfamily. Ser/Thr protein kinase family.</text>
</comment>
<organism>
    <name type="scientific">Bos taurus</name>
    <name type="common">Bovine</name>
    <dbReference type="NCBI Taxonomy" id="9913"/>
    <lineage>
        <taxon>Eukaryota</taxon>
        <taxon>Metazoa</taxon>
        <taxon>Chordata</taxon>
        <taxon>Craniata</taxon>
        <taxon>Vertebrata</taxon>
        <taxon>Euteleostomi</taxon>
        <taxon>Mammalia</taxon>
        <taxon>Eutheria</taxon>
        <taxon>Laurasiatheria</taxon>
        <taxon>Artiodactyla</taxon>
        <taxon>Ruminantia</taxon>
        <taxon>Pecora</taxon>
        <taxon>Bovidae</taxon>
        <taxon>Bovinae</taxon>
        <taxon>Bos</taxon>
    </lineage>
</organism>
<proteinExistence type="evidence at transcript level"/>
<accession>A7MBB4</accession>
<dbReference type="EC" id="2.7.11.25"/>
<dbReference type="EMBL" id="BC151464">
    <property type="protein sequence ID" value="AAI51465.1"/>
    <property type="molecule type" value="mRNA"/>
</dbReference>
<dbReference type="RefSeq" id="NP_001095323.1">
    <property type="nucleotide sequence ID" value="NM_001101853.2"/>
</dbReference>
<dbReference type="SMR" id="A7MBB4"/>
<dbReference type="FunCoup" id="A7MBB4">
    <property type="interactions" value="1048"/>
</dbReference>
<dbReference type="STRING" id="9913.ENSBTAP00000066461"/>
<dbReference type="PaxDb" id="9913-ENSBTAP00000022739"/>
<dbReference type="GeneID" id="505369"/>
<dbReference type="KEGG" id="bta:505369"/>
<dbReference type="CTD" id="9175"/>
<dbReference type="eggNOG" id="KOG4721">
    <property type="taxonomic scope" value="Eukaryota"/>
</dbReference>
<dbReference type="InParanoid" id="A7MBB4"/>
<dbReference type="OrthoDB" id="339325at2759"/>
<dbReference type="Proteomes" id="UP000009136">
    <property type="component" value="Unplaced"/>
</dbReference>
<dbReference type="GO" id="GO:0005737">
    <property type="term" value="C:cytoplasm"/>
    <property type="evidence" value="ECO:0000318"/>
    <property type="project" value="GO_Central"/>
</dbReference>
<dbReference type="GO" id="GO:0016020">
    <property type="term" value="C:membrane"/>
    <property type="evidence" value="ECO:0007669"/>
    <property type="project" value="UniProtKB-SubCell"/>
</dbReference>
<dbReference type="GO" id="GO:0005524">
    <property type="term" value="F:ATP binding"/>
    <property type="evidence" value="ECO:0007669"/>
    <property type="project" value="UniProtKB-KW"/>
</dbReference>
<dbReference type="GO" id="GO:0004709">
    <property type="term" value="F:MAP kinase kinase kinase activity"/>
    <property type="evidence" value="ECO:0007669"/>
    <property type="project" value="UniProtKB-EC"/>
</dbReference>
<dbReference type="GO" id="GO:0046872">
    <property type="term" value="F:metal ion binding"/>
    <property type="evidence" value="ECO:0007669"/>
    <property type="project" value="UniProtKB-KW"/>
</dbReference>
<dbReference type="GO" id="GO:0042803">
    <property type="term" value="F:protein homodimerization activity"/>
    <property type="evidence" value="ECO:0007669"/>
    <property type="project" value="InterPro"/>
</dbReference>
<dbReference type="GO" id="GO:0004672">
    <property type="term" value="F:protein kinase activity"/>
    <property type="evidence" value="ECO:0000318"/>
    <property type="project" value="GO_Central"/>
</dbReference>
<dbReference type="GO" id="GO:0106310">
    <property type="term" value="F:protein serine kinase activity"/>
    <property type="evidence" value="ECO:0007669"/>
    <property type="project" value="RHEA"/>
</dbReference>
<dbReference type="GO" id="GO:0007254">
    <property type="term" value="P:JNK cascade"/>
    <property type="evidence" value="ECO:0007669"/>
    <property type="project" value="InterPro"/>
</dbReference>
<dbReference type="GO" id="GO:0060255">
    <property type="term" value="P:regulation of macromolecule metabolic process"/>
    <property type="evidence" value="ECO:0007669"/>
    <property type="project" value="UniProtKB-ARBA"/>
</dbReference>
<dbReference type="GO" id="GO:0080090">
    <property type="term" value="P:regulation of primary metabolic process"/>
    <property type="evidence" value="ECO:0007669"/>
    <property type="project" value="UniProtKB-ARBA"/>
</dbReference>
<dbReference type="GO" id="GO:0007165">
    <property type="term" value="P:signal transduction"/>
    <property type="evidence" value="ECO:0000318"/>
    <property type="project" value="GO_Central"/>
</dbReference>
<dbReference type="CDD" id="cd14059">
    <property type="entry name" value="STKc_MAP3K12_13"/>
    <property type="match status" value="1"/>
</dbReference>
<dbReference type="FunFam" id="1.10.510.10:FF:000087">
    <property type="entry name" value="Mitogen-activated protein kinase kinase kinase 12"/>
    <property type="match status" value="1"/>
</dbReference>
<dbReference type="FunFam" id="3.30.200.20:FF:000095">
    <property type="entry name" value="Mitogen-activated protein kinase kinase kinase 12"/>
    <property type="match status" value="1"/>
</dbReference>
<dbReference type="Gene3D" id="3.30.200.20">
    <property type="entry name" value="Phosphorylase Kinase, domain 1"/>
    <property type="match status" value="1"/>
</dbReference>
<dbReference type="Gene3D" id="1.10.510.10">
    <property type="entry name" value="Transferase(Phosphotransferase) domain 1"/>
    <property type="match status" value="1"/>
</dbReference>
<dbReference type="InterPro" id="IPR011009">
    <property type="entry name" value="Kinase-like_dom_sf"/>
</dbReference>
<dbReference type="InterPro" id="IPR017419">
    <property type="entry name" value="MAP3K12_MAP3K13"/>
</dbReference>
<dbReference type="InterPro" id="IPR027258">
    <property type="entry name" value="MAPKKK13"/>
</dbReference>
<dbReference type="InterPro" id="IPR000719">
    <property type="entry name" value="Prot_kinase_dom"/>
</dbReference>
<dbReference type="InterPro" id="IPR001245">
    <property type="entry name" value="Ser-Thr/Tyr_kinase_cat_dom"/>
</dbReference>
<dbReference type="InterPro" id="IPR008271">
    <property type="entry name" value="Ser/Thr_kinase_AS"/>
</dbReference>
<dbReference type="InterPro" id="IPR051681">
    <property type="entry name" value="Ser/Thr_Kinases-Pseudokinases"/>
</dbReference>
<dbReference type="PANTHER" id="PTHR44329:SF14">
    <property type="entry name" value="MITOGEN-ACTIVATED PROTEIN KINASE KINASE KINASE 13"/>
    <property type="match status" value="1"/>
</dbReference>
<dbReference type="PANTHER" id="PTHR44329">
    <property type="entry name" value="SERINE/THREONINE-PROTEIN KINASE TNNI3K-RELATED"/>
    <property type="match status" value="1"/>
</dbReference>
<dbReference type="Pfam" id="PF07714">
    <property type="entry name" value="PK_Tyr_Ser-Thr"/>
    <property type="match status" value="1"/>
</dbReference>
<dbReference type="PIRSF" id="PIRSF038165">
    <property type="entry name" value="MAPKKK12_MAPKKK13"/>
    <property type="match status" value="1"/>
</dbReference>
<dbReference type="PIRSF" id="PIRSF500742">
    <property type="entry name" value="MAPKKK13"/>
    <property type="match status" value="1"/>
</dbReference>
<dbReference type="PRINTS" id="PR00109">
    <property type="entry name" value="TYRKINASE"/>
</dbReference>
<dbReference type="SMART" id="SM00220">
    <property type="entry name" value="S_TKc"/>
    <property type="match status" value="1"/>
</dbReference>
<dbReference type="SUPFAM" id="SSF56112">
    <property type="entry name" value="Protein kinase-like (PK-like)"/>
    <property type="match status" value="1"/>
</dbReference>
<dbReference type="PROSITE" id="PS50011">
    <property type="entry name" value="PROTEIN_KINASE_DOM"/>
    <property type="match status" value="1"/>
</dbReference>
<dbReference type="PROSITE" id="PS00108">
    <property type="entry name" value="PROTEIN_KINASE_ST"/>
    <property type="match status" value="1"/>
</dbReference>
<gene>
    <name type="primary">MAP3K13</name>
</gene>
<evidence type="ECO:0000250" key="1"/>
<evidence type="ECO:0000255" key="2"/>
<evidence type="ECO:0000255" key="3">
    <source>
        <dbReference type="PROSITE-ProRule" id="PRU00159"/>
    </source>
</evidence>
<evidence type="ECO:0000255" key="4">
    <source>
        <dbReference type="PROSITE-ProRule" id="PRU10027"/>
    </source>
</evidence>
<evidence type="ECO:0000256" key="5">
    <source>
        <dbReference type="SAM" id="MobiDB-lite"/>
    </source>
</evidence>
<name>M3K13_BOVIN</name>
<keyword id="KW-0067">ATP-binding</keyword>
<keyword id="KW-0175">Coiled coil</keyword>
<keyword id="KW-0963">Cytoplasm</keyword>
<keyword id="KW-0418">Kinase</keyword>
<keyword id="KW-0460">Magnesium</keyword>
<keyword id="KW-0472">Membrane</keyword>
<keyword id="KW-0479">Metal-binding</keyword>
<keyword id="KW-0547">Nucleotide-binding</keyword>
<keyword id="KW-0597">Phosphoprotein</keyword>
<keyword id="KW-1185">Reference proteome</keyword>
<keyword id="KW-0677">Repeat</keyword>
<keyword id="KW-0723">Serine/threonine-protein kinase</keyword>
<keyword id="KW-0808">Transferase</keyword>
<protein>
    <recommendedName>
        <fullName>Mitogen-activated protein kinase kinase kinase 13</fullName>
        <ecNumber>2.7.11.25</ecNumber>
    </recommendedName>
</protein>
<reference key="1">
    <citation type="submission" date="2007-07" db="EMBL/GenBank/DDBJ databases">
        <authorList>
            <consortium name="NIH - Mammalian Gene Collection (MGC) project"/>
        </authorList>
    </citation>
    <scope>NUCLEOTIDE SEQUENCE [LARGE SCALE MRNA]</scope>
    <source>
        <strain>Hereford</strain>
        <tissue>Fetal liver</tissue>
    </source>
</reference>
<feature type="chain" id="PRO_0000366128" description="Mitogen-activated protein kinase kinase kinase 13">
    <location>
        <begin position="1"/>
        <end position="966"/>
    </location>
</feature>
<feature type="domain" description="Protein kinase" evidence="3">
    <location>
        <begin position="168"/>
        <end position="409"/>
    </location>
</feature>
<feature type="region of interest" description="Disordered" evidence="5">
    <location>
        <begin position="1"/>
        <end position="59"/>
    </location>
</feature>
<feature type="region of interest" description="Leucine-zipper 1">
    <location>
        <begin position="433"/>
        <end position="454"/>
    </location>
</feature>
<feature type="region of interest" description="Leucine-zipper 2">
    <location>
        <begin position="486"/>
        <end position="507"/>
    </location>
</feature>
<feature type="region of interest" description="Disordered" evidence="5">
    <location>
        <begin position="561"/>
        <end position="663"/>
    </location>
</feature>
<feature type="region of interest" description="Disordered" evidence="5">
    <location>
        <begin position="743"/>
        <end position="874"/>
    </location>
</feature>
<feature type="region of interest" description="Acidic" evidence="1">
    <location>
        <begin position="815"/>
        <end position="828"/>
    </location>
</feature>
<feature type="region of interest" description="Disordered" evidence="5">
    <location>
        <begin position="937"/>
        <end position="966"/>
    </location>
</feature>
<feature type="coiled-coil region" evidence="2">
    <location>
        <begin position="457"/>
        <end position="496"/>
    </location>
</feature>
<feature type="compositionally biased region" description="Low complexity" evidence="5">
    <location>
        <begin position="8"/>
        <end position="19"/>
    </location>
</feature>
<feature type="compositionally biased region" description="Low complexity" evidence="5">
    <location>
        <begin position="567"/>
        <end position="581"/>
    </location>
</feature>
<feature type="compositionally biased region" description="Basic residues" evidence="5">
    <location>
        <begin position="582"/>
        <end position="594"/>
    </location>
</feature>
<feature type="compositionally biased region" description="Polar residues" evidence="5">
    <location>
        <begin position="609"/>
        <end position="622"/>
    </location>
</feature>
<feature type="compositionally biased region" description="Low complexity" evidence="5">
    <location>
        <begin position="629"/>
        <end position="642"/>
    </location>
</feature>
<feature type="compositionally biased region" description="Acidic residues" evidence="5">
    <location>
        <begin position="814"/>
        <end position="827"/>
    </location>
</feature>
<feature type="compositionally biased region" description="Polar residues" evidence="5">
    <location>
        <begin position="840"/>
        <end position="855"/>
    </location>
</feature>
<feature type="compositionally biased region" description="Acidic residues" evidence="5">
    <location>
        <begin position="939"/>
        <end position="950"/>
    </location>
</feature>
<feature type="compositionally biased region" description="Polar residues" evidence="5">
    <location>
        <begin position="954"/>
        <end position="966"/>
    </location>
</feature>
<feature type="active site" description="Proton acceptor" evidence="3 4">
    <location>
        <position position="279"/>
    </location>
</feature>
<feature type="binding site" evidence="3">
    <location>
        <begin position="174"/>
        <end position="182"/>
    </location>
    <ligand>
        <name>ATP</name>
        <dbReference type="ChEBI" id="CHEBI:30616"/>
    </ligand>
</feature>
<feature type="binding site" evidence="3">
    <location>
        <position position="195"/>
    </location>
    <ligand>
        <name>ATP</name>
        <dbReference type="ChEBI" id="CHEBI:30616"/>
    </ligand>
</feature>
<sequence>MANPQEHLSCSSSPRLPLSENKTFNGLQDDLAPMGSHASPKLLKDQQEKGMVQTELAEGTNSPITTTVLTSISEDSRDQFENSVLQLREQDESEMAMSHGNSNTVDGEGTSGTEDIKIQFSRSGSGSGGFLEGLFGCLRPVWNIIGKAYSTDYKLQQQDTWEVPFEEISELQWLGSGAQGAVFLGKFRAEEVAIKKVREQNETDIKHLRKLKHPNIIAFKGVCTQAPCYCIIMEYCAHGQLYEVLRAGRKITPRLLVDWSTGIASGMNYLHLHKIIHRDLKSPNVLVTHTDAVKISDFGTSKELSDKSTKMSFAGTVAWMAPEVIRNEPVSEKVDIWSFGVVLWELLTGEIPYKDVDSSAIIWGVGSNSLHLPVPSTCPDGFKILMKQTWQSKTRNRPSFRQTLMHLDIASADVLATPQETYFKSQAEWREEVKKHFEKIKSEGTCIHRLDEELIRRRREELRHALDIREHYERKLERANNLYMELSAIMLQLEMREKELIKREQAVEKKYPGTYKRHPVRPIIHPNAMEKLMKRKGMPHRPGMQAKRPDLLRSEGIPSVEVAPTASPLSGSPKLSSSSSKSRYRSKPRHRRGNSRGSHGDFAAILKNQPAQEDSPHPTSLHQAEPQYPSSQHHNLLQQQYQQPPPAMSQSHHPRLNMHGQDIATCPNNLRYFGPAAALRSPLSNHSQRQMPGSSPDLISTAMAADCWRSSEPDKGQAGPWGCCQADPYDPCLQCRPEQHGSLDVPSAKPVGRSPSLFKPPAHNPLLENAQGSEKMEENEFSGYRSASSLGASHHITPPVLPRKTRPLQKSGDDSSEEEEGEVDSEVEFPRRQRPHRCISSCQSYSTFSSENFSVSDGEEGNTSDHSNSPDELADKLEDHLAEKLDDLLSQTPEIPIEISSHSDGLSDKECAVRRVKTQMSLGKLCAEERGYENPMQFEESDCDSSDGECSDATVRTNKHYSSATW</sequence>